<feature type="chain" id="PRO_1000166108" description="Large ribosomal subunit protein uL5">
    <location>
        <begin position="1"/>
        <end position="179"/>
    </location>
</feature>
<reference key="1">
    <citation type="submission" date="2009-04" db="EMBL/GenBank/DDBJ databases">
        <title>Genome sequence of Bacillus anthracis A0248.</title>
        <authorList>
            <person name="Dodson R.J."/>
            <person name="Munk A.C."/>
            <person name="Bruce D."/>
            <person name="Detter C."/>
            <person name="Tapia R."/>
            <person name="Sutton G."/>
            <person name="Sims D."/>
            <person name="Brettin T."/>
        </authorList>
    </citation>
    <scope>NUCLEOTIDE SEQUENCE [LARGE SCALE GENOMIC DNA]</scope>
    <source>
        <strain>A0248</strain>
    </source>
</reference>
<evidence type="ECO:0000255" key="1">
    <source>
        <dbReference type="HAMAP-Rule" id="MF_01333"/>
    </source>
</evidence>
<evidence type="ECO:0000305" key="2"/>
<dbReference type="EMBL" id="CP001598">
    <property type="protein sequence ID" value="ACQ46806.1"/>
    <property type="molecule type" value="Genomic_DNA"/>
</dbReference>
<dbReference type="RefSeq" id="WP_001080834.1">
    <property type="nucleotide sequence ID" value="NC_012659.1"/>
</dbReference>
<dbReference type="SMR" id="C3P9R7"/>
<dbReference type="GeneID" id="45020167"/>
<dbReference type="KEGG" id="bai:BAA_0138"/>
<dbReference type="HOGENOM" id="CLU_061015_2_1_9"/>
<dbReference type="GO" id="GO:1990904">
    <property type="term" value="C:ribonucleoprotein complex"/>
    <property type="evidence" value="ECO:0007669"/>
    <property type="project" value="UniProtKB-KW"/>
</dbReference>
<dbReference type="GO" id="GO:0005840">
    <property type="term" value="C:ribosome"/>
    <property type="evidence" value="ECO:0007669"/>
    <property type="project" value="UniProtKB-KW"/>
</dbReference>
<dbReference type="GO" id="GO:0019843">
    <property type="term" value="F:rRNA binding"/>
    <property type="evidence" value="ECO:0007669"/>
    <property type="project" value="UniProtKB-UniRule"/>
</dbReference>
<dbReference type="GO" id="GO:0003735">
    <property type="term" value="F:structural constituent of ribosome"/>
    <property type="evidence" value="ECO:0007669"/>
    <property type="project" value="InterPro"/>
</dbReference>
<dbReference type="GO" id="GO:0000049">
    <property type="term" value="F:tRNA binding"/>
    <property type="evidence" value="ECO:0007669"/>
    <property type="project" value="UniProtKB-UniRule"/>
</dbReference>
<dbReference type="GO" id="GO:0006412">
    <property type="term" value="P:translation"/>
    <property type="evidence" value="ECO:0007669"/>
    <property type="project" value="UniProtKB-UniRule"/>
</dbReference>
<dbReference type="FunFam" id="3.30.1440.10:FF:000001">
    <property type="entry name" value="50S ribosomal protein L5"/>
    <property type="match status" value="1"/>
</dbReference>
<dbReference type="Gene3D" id="3.30.1440.10">
    <property type="match status" value="1"/>
</dbReference>
<dbReference type="HAMAP" id="MF_01333_B">
    <property type="entry name" value="Ribosomal_uL5_B"/>
    <property type="match status" value="1"/>
</dbReference>
<dbReference type="InterPro" id="IPR002132">
    <property type="entry name" value="Ribosomal_uL5"/>
</dbReference>
<dbReference type="InterPro" id="IPR020930">
    <property type="entry name" value="Ribosomal_uL5_bac-type"/>
</dbReference>
<dbReference type="InterPro" id="IPR031309">
    <property type="entry name" value="Ribosomal_uL5_C"/>
</dbReference>
<dbReference type="InterPro" id="IPR020929">
    <property type="entry name" value="Ribosomal_uL5_CS"/>
</dbReference>
<dbReference type="InterPro" id="IPR022803">
    <property type="entry name" value="Ribosomal_uL5_dom_sf"/>
</dbReference>
<dbReference type="InterPro" id="IPR031310">
    <property type="entry name" value="Ribosomal_uL5_N"/>
</dbReference>
<dbReference type="NCBIfam" id="NF000585">
    <property type="entry name" value="PRK00010.1"/>
    <property type="match status" value="1"/>
</dbReference>
<dbReference type="PANTHER" id="PTHR11994">
    <property type="entry name" value="60S RIBOSOMAL PROTEIN L11-RELATED"/>
    <property type="match status" value="1"/>
</dbReference>
<dbReference type="Pfam" id="PF00281">
    <property type="entry name" value="Ribosomal_L5"/>
    <property type="match status" value="1"/>
</dbReference>
<dbReference type="Pfam" id="PF00673">
    <property type="entry name" value="Ribosomal_L5_C"/>
    <property type="match status" value="1"/>
</dbReference>
<dbReference type="PIRSF" id="PIRSF002161">
    <property type="entry name" value="Ribosomal_L5"/>
    <property type="match status" value="1"/>
</dbReference>
<dbReference type="SUPFAM" id="SSF55282">
    <property type="entry name" value="RL5-like"/>
    <property type="match status" value="1"/>
</dbReference>
<dbReference type="PROSITE" id="PS00358">
    <property type="entry name" value="RIBOSOMAL_L5"/>
    <property type="match status" value="1"/>
</dbReference>
<accession>C3P9R7</accession>
<proteinExistence type="inferred from homology"/>
<keyword id="KW-0687">Ribonucleoprotein</keyword>
<keyword id="KW-0689">Ribosomal protein</keyword>
<keyword id="KW-0694">RNA-binding</keyword>
<keyword id="KW-0699">rRNA-binding</keyword>
<keyword id="KW-0820">tRNA-binding</keyword>
<organism>
    <name type="scientific">Bacillus anthracis (strain A0248)</name>
    <dbReference type="NCBI Taxonomy" id="592021"/>
    <lineage>
        <taxon>Bacteria</taxon>
        <taxon>Bacillati</taxon>
        <taxon>Bacillota</taxon>
        <taxon>Bacilli</taxon>
        <taxon>Bacillales</taxon>
        <taxon>Bacillaceae</taxon>
        <taxon>Bacillus</taxon>
        <taxon>Bacillus cereus group</taxon>
    </lineage>
</organism>
<gene>
    <name evidence="1" type="primary">rplE</name>
    <name type="ordered locus">BAA_0138</name>
</gene>
<protein>
    <recommendedName>
        <fullName evidence="1">Large ribosomal subunit protein uL5</fullName>
    </recommendedName>
    <alternativeName>
        <fullName evidence="2">50S ribosomal protein L5</fullName>
    </alternativeName>
</protein>
<sequence>MNRLKEKFQKEITPALVSKFNYKSVMQVPKIEKIVINTGVGDAVSNSKTLDNAVEELTQITGQKPVVTRAKKSIAGFRLREGMPIGAKVTLRGEQMYEFFDKLVSVSLPRVRDFRGVSKKSFDGRGNYTLGVKEQLIFPEIDYDKVSKVRGMDIVIVTTAKTDEEARELLTQFGMPFQK</sequence>
<name>RL5_BACAA</name>
<comment type="function">
    <text evidence="1">This is one of the proteins that bind and probably mediate the attachment of the 5S RNA into the large ribosomal subunit, where it forms part of the central protuberance. In the 70S ribosome it contacts protein S13 of the 30S subunit (bridge B1b), connecting the 2 subunits; this bridge is implicated in subunit movement. Contacts the P site tRNA; the 5S rRNA and some of its associated proteins might help stabilize positioning of ribosome-bound tRNAs.</text>
</comment>
<comment type="subunit">
    <text evidence="1">Part of the 50S ribosomal subunit; part of the 5S rRNA/L5/L18/L25 subcomplex. Contacts the 5S rRNA and the P site tRNA. Forms a bridge to the 30S subunit in the 70S ribosome.</text>
</comment>
<comment type="similarity">
    <text evidence="1">Belongs to the universal ribosomal protein uL5 family.</text>
</comment>